<keyword id="KW-0004">4Fe-4S</keyword>
<keyword id="KW-0963">Cytoplasm</keyword>
<keyword id="KW-0408">Iron</keyword>
<keyword id="KW-0411">Iron-sulfur</keyword>
<keyword id="KW-0479">Metal-binding</keyword>
<keyword id="KW-1185">Reference proteome</keyword>
<keyword id="KW-0949">S-adenosyl-L-methionine</keyword>
<keyword id="KW-0808">Transferase</keyword>
<sequence>MTVKPDWLRVKAPQWERVGNVKEILRDLALNTVCEEASCPNIGECFQAGTATFLIMGPACTRACPYCDIDFEKKPKALDPTEPTRLAEAVRRMRLNHVVITSVNRDDLPDGGASQFVKCIAEVRAVSPQTTIEVLIPDLCGNWEALRIILQASPEVLNHNTETIPRLYRRVRPQGNYDRTLELLQRSRQIAPWLYTKSGIMVGLGETNAEVRQVMQDLRAVDCDILTIGQYLQPSQKHLQVNDFVTPEQFAAWQVYGEELGFLQVVSSPLTRSSYHAEQVRQLMERYPRNK</sequence>
<reference key="1">
    <citation type="journal article" date="2001" name="DNA Res.">
        <title>Complete genomic sequence of the filamentous nitrogen-fixing cyanobacterium Anabaena sp. strain PCC 7120.</title>
        <authorList>
            <person name="Kaneko T."/>
            <person name="Nakamura Y."/>
            <person name="Wolk C.P."/>
            <person name="Kuritz T."/>
            <person name="Sasamoto S."/>
            <person name="Watanabe A."/>
            <person name="Iriguchi M."/>
            <person name="Ishikawa A."/>
            <person name="Kawashima K."/>
            <person name="Kimura T."/>
            <person name="Kishida Y."/>
            <person name="Kohara M."/>
            <person name="Matsumoto M."/>
            <person name="Matsuno A."/>
            <person name="Muraki A."/>
            <person name="Nakazaki N."/>
            <person name="Shimpo S."/>
            <person name="Sugimoto M."/>
            <person name="Takazawa M."/>
            <person name="Yamada M."/>
            <person name="Yasuda M."/>
            <person name="Tabata S."/>
        </authorList>
    </citation>
    <scope>NUCLEOTIDE SEQUENCE [LARGE SCALE GENOMIC DNA]</scope>
    <source>
        <strain>PCC 7120 / SAG 25.82 / UTEX 2576</strain>
    </source>
</reference>
<evidence type="ECO:0000255" key="1">
    <source>
        <dbReference type="HAMAP-Rule" id="MF_00206"/>
    </source>
</evidence>
<evidence type="ECO:0000255" key="2">
    <source>
        <dbReference type="PROSITE-ProRule" id="PRU01266"/>
    </source>
</evidence>
<proteinExistence type="inferred from homology"/>
<gene>
    <name evidence="1" type="primary">lipA1</name>
    <name type="ordered locus">all1694</name>
</gene>
<accession>Q8YWC1</accession>
<feature type="chain" id="PRO_0000102282" description="Lipoyl synthase 1">
    <location>
        <begin position="1"/>
        <end position="291"/>
    </location>
</feature>
<feature type="domain" description="Radical SAM core" evidence="2">
    <location>
        <begin position="46"/>
        <end position="263"/>
    </location>
</feature>
<feature type="binding site" evidence="1">
    <location>
        <position position="34"/>
    </location>
    <ligand>
        <name>[4Fe-4S] cluster</name>
        <dbReference type="ChEBI" id="CHEBI:49883"/>
        <label>1</label>
    </ligand>
</feature>
<feature type="binding site" evidence="1">
    <location>
        <position position="39"/>
    </location>
    <ligand>
        <name>[4Fe-4S] cluster</name>
        <dbReference type="ChEBI" id="CHEBI:49883"/>
        <label>1</label>
    </ligand>
</feature>
<feature type="binding site" evidence="1">
    <location>
        <position position="45"/>
    </location>
    <ligand>
        <name>[4Fe-4S] cluster</name>
        <dbReference type="ChEBI" id="CHEBI:49883"/>
        <label>1</label>
    </ligand>
</feature>
<feature type="binding site" evidence="1">
    <location>
        <position position="60"/>
    </location>
    <ligand>
        <name>[4Fe-4S] cluster</name>
        <dbReference type="ChEBI" id="CHEBI:49883"/>
        <label>2</label>
        <note>4Fe-4S-S-AdoMet</note>
    </ligand>
</feature>
<feature type="binding site" evidence="1">
    <location>
        <position position="64"/>
    </location>
    <ligand>
        <name>[4Fe-4S] cluster</name>
        <dbReference type="ChEBI" id="CHEBI:49883"/>
        <label>2</label>
        <note>4Fe-4S-S-AdoMet</note>
    </ligand>
</feature>
<feature type="binding site" evidence="1">
    <location>
        <position position="67"/>
    </location>
    <ligand>
        <name>[4Fe-4S] cluster</name>
        <dbReference type="ChEBI" id="CHEBI:49883"/>
        <label>2</label>
        <note>4Fe-4S-S-AdoMet</note>
    </ligand>
</feature>
<feature type="binding site" evidence="1">
    <location>
        <position position="274"/>
    </location>
    <ligand>
        <name>[4Fe-4S] cluster</name>
        <dbReference type="ChEBI" id="CHEBI:49883"/>
        <label>1</label>
    </ligand>
</feature>
<organism>
    <name type="scientific">Nostoc sp. (strain PCC 7120 / SAG 25.82 / UTEX 2576)</name>
    <dbReference type="NCBI Taxonomy" id="103690"/>
    <lineage>
        <taxon>Bacteria</taxon>
        <taxon>Bacillati</taxon>
        <taxon>Cyanobacteriota</taxon>
        <taxon>Cyanophyceae</taxon>
        <taxon>Nostocales</taxon>
        <taxon>Nostocaceae</taxon>
        <taxon>Nostoc</taxon>
    </lineage>
</organism>
<name>LIPA1_NOSS1</name>
<comment type="function">
    <text evidence="1">Catalyzes the radical-mediated insertion of two sulfur atoms into the C-6 and C-8 positions of the octanoyl moiety bound to the lipoyl domains of lipoate-dependent enzymes, thereby converting the octanoylated domains into lipoylated derivatives.</text>
</comment>
<comment type="catalytic activity">
    <reaction evidence="1">
        <text>[[Fe-S] cluster scaffold protein carrying a second [4Fe-4S](2+) cluster] + N(6)-octanoyl-L-lysyl-[protein] + 2 oxidized [2Fe-2S]-[ferredoxin] + 2 S-adenosyl-L-methionine + 4 H(+) = [[Fe-S] cluster scaffold protein] + N(6)-[(R)-dihydrolipoyl]-L-lysyl-[protein] + 4 Fe(3+) + 2 hydrogen sulfide + 2 5'-deoxyadenosine + 2 L-methionine + 2 reduced [2Fe-2S]-[ferredoxin]</text>
        <dbReference type="Rhea" id="RHEA:16585"/>
        <dbReference type="Rhea" id="RHEA-COMP:9928"/>
        <dbReference type="Rhea" id="RHEA-COMP:10000"/>
        <dbReference type="Rhea" id="RHEA-COMP:10001"/>
        <dbReference type="Rhea" id="RHEA-COMP:10475"/>
        <dbReference type="Rhea" id="RHEA-COMP:14568"/>
        <dbReference type="Rhea" id="RHEA-COMP:14569"/>
        <dbReference type="ChEBI" id="CHEBI:15378"/>
        <dbReference type="ChEBI" id="CHEBI:17319"/>
        <dbReference type="ChEBI" id="CHEBI:29034"/>
        <dbReference type="ChEBI" id="CHEBI:29919"/>
        <dbReference type="ChEBI" id="CHEBI:33722"/>
        <dbReference type="ChEBI" id="CHEBI:33737"/>
        <dbReference type="ChEBI" id="CHEBI:33738"/>
        <dbReference type="ChEBI" id="CHEBI:57844"/>
        <dbReference type="ChEBI" id="CHEBI:59789"/>
        <dbReference type="ChEBI" id="CHEBI:78809"/>
        <dbReference type="ChEBI" id="CHEBI:83100"/>
        <dbReference type="EC" id="2.8.1.8"/>
    </reaction>
</comment>
<comment type="cofactor">
    <cofactor evidence="1">
        <name>[4Fe-4S] cluster</name>
        <dbReference type="ChEBI" id="CHEBI:49883"/>
    </cofactor>
    <text evidence="1">Binds 2 [4Fe-4S] clusters per subunit. One cluster is coordinated with 3 cysteines and an exchangeable S-adenosyl-L-methionine.</text>
</comment>
<comment type="pathway">
    <text evidence="1">Protein modification; protein lipoylation via endogenous pathway; protein N(6)-(lipoyl)lysine from octanoyl-[acyl-carrier-protein]: step 2/2.</text>
</comment>
<comment type="subcellular location">
    <subcellularLocation>
        <location evidence="1">Cytoplasm</location>
    </subcellularLocation>
</comment>
<comment type="similarity">
    <text evidence="1">Belongs to the radical SAM superfamily. Lipoyl synthase family.</text>
</comment>
<protein>
    <recommendedName>
        <fullName evidence="1">Lipoyl synthase 1</fullName>
        <ecNumber evidence="1">2.8.1.8</ecNumber>
    </recommendedName>
    <alternativeName>
        <fullName evidence="1">Lip-syn 1</fullName>
        <shortName evidence="1">LS 1</shortName>
    </alternativeName>
    <alternativeName>
        <fullName evidence="1">Lipoate synthase 1</fullName>
    </alternativeName>
    <alternativeName>
        <fullName evidence="1">Lipoic acid synthase 1</fullName>
    </alternativeName>
    <alternativeName>
        <fullName evidence="1">Sulfur insertion protein LipA 1</fullName>
    </alternativeName>
</protein>
<dbReference type="EC" id="2.8.1.8" evidence="1"/>
<dbReference type="EMBL" id="BA000019">
    <property type="protein sequence ID" value="BAB78060.1"/>
    <property type="molecule type" value="Genomic_DNA"/>
</dbReference>
<dbReference type="PIR" id="AH2017">
    <property type="entry name" value="AH2017"/>
</dbReference>
<dbReference type="SMR" id="Q8YWC1"/>
<dbReference type="STRING" id="103690.gene:10493711"/>
<dbReference type="KEGG" id="ana:all1694"/>
<dbReference type="eggNOG" id="COG0320">
    <property type="taxonomic scope" value="Bacteria"/>
</dbReference>
<dbReference type="OrthoDB" id="9787898at2"/>
<dbReference type="UniPathway" id="UPA00538">
    <property type="reaction ID" value="UER00593"/>
</dbReference>
<dbReference type="Proteomes" id="UP000002483">
    <property type="component" value="Chromosome"/>
</dbReference>
<dbReference type="GO" id="GO:0005737">
    <property type="term" value="C:cytoplasm"/>
    <property type="evidence" value="ECO:0007669"/>
    <property type="project" value="UniProtKB-SubCell"/>
</dbReference>
<dbReference type="GO" id="GO:0051539">
    <property type="term" value="F:4 iron, 4 sulfur cluster binding"/>
    <property type="evidence" value="ECO:0007669"/>
    <property type="project" value="UniProtKB-UniRule"/>
</dbReference>
<dbReference type="GO" id="GO:0016992">
    <property type="term" value="F:lipoate synthase activity"/>
    <property type="evidence" value="ECO:0007669"/>
    <property type="project" value="UniProtKB-UniRule"/>
</dbReference>
<dbReference type="GO" id="GO:0046872">
    <property type="term" value="F:metal ion binding"/>
    <property type="evidence" value="ECO:0007669"/>
    <property type="project" value="UniProtKB-KW"/>
</dbReference>
<dbReference type="CDD" id="cd01335">
    <property type="entry name" value="Radical_SAM"/>
    <property type="match status" value="1"/>
</dbReference>
<dbReference type="FunFam" id="3.20.20.70:FF:000040">
    <property type="entry name" value="Lipoyl synthase"/>
    <property type="match status" value="1"/>
</dbReference>
<dbReference type="Gene3D" id="3.20.20.70">
    <property type="entry name" value="Aldolase class I"/>
    <property type="match status" value="1"/>
</dbReference>
<dbReference type="HAMAP" id="MF_00206">
    <property type="entry name" value="Lipoyl_synth"/>
    <property type="match status" value="1"/>
</dbReference>
<dbReference type="InterPro" id="IPR013785">
    <property type="entry name" value="Aldolase_TIM"/>
</dbReference>
<dbReference type="InterPro" id="IPR006638">
    <property type="entry name" value="Elp3/MiaA/NifB-like_rSAM"/>
</dbReference>
<dbReference type="InterPro" id="IPR003698">
    <property type="entry name" value="Lipoyl_synth"/>
</dbReference>
<dbReference type="InterPro" id="IPR007197">
    <property type="entry name" value="rSAM"/>
</dbReference>
<dbReference type="NCBIfam" id="TIGR00510">
    <property type="entry name" value="lipA"/>
    <property type="match status" value="1"/>
</dbReference>
<dbReference type="NCBIfam" id="NF004019">
    <property type="entry name" value="PRK05481.1"/>
    <property type="match status" value="1"/>
</dbReference>
<dbReference type="NCBIfam" id="NF009544">
    <property type="entry name" value="PRK12928.1"/>
    <property type="match status" value="1"/>
</dbReference>
<dbReference type="PANTHER" id="PTHR10949">
    <property type="entry name" value="LIPOYL SYNTHASE"/>
    <property type="match status" value="1"/>
</dbReference>
<dbReference type="PANTHER" id="PTHR10949:SF0">
    <property type="entry name" value="LIPOYL SYNTHASE, MITOCHONDRIAL"/>
    <property type="match status" value="1"/>
</dbReference>
<dbReference type="Pfam" id="PF04055">
    <property type="entry name" value="Radical_SAM"/>
    <property type="match status" value="1"/>
</dbReference>
<dbReference type="PIRSF" id="PIRSF005963">
    <property type="entry name" value="Lipoyl_synth"/>
    <property type="match status" value="1"/>
</dbReference>
<dbReference type="SFLD" id="SFLDF00271">
    <property type="entry name" value="lipoyl_synthase"/>
    <property type="match status" value="1"/>
</dbReference>
<dbReference type="SFLD" id="SFLDS00029">
    <property type="entry name" value="Radical_SAM"/>
    <property type="match status" value="1"/>
</dbReference>
<dbReference type="SMART" id="SM00729">
    <property type="entry name" value="Elp3"/>
    <property type="match status" value="1"/>
</dbReference>
<dbReference type="SUPFAM" id="SSF102114">
    <property type="entry name" value="Radical SAM enzymes"/>
    <property type="match status" value="1"/>
</dbReference>
<dbReference type="PROSITE" id="PS51918">
    <property type="entry name" value="RADICAL_SAM"/>
    <property type="match status" value="1"/>
</dbReference>